<gene>
    <name type="primary">PTTG1</name>
</gene>
<protein>
    <recommendedName>
        <fullName>Securin</fullName>
    </recommendedName>
    <alternativeName>
        <fullName>Pituitary tumor-transforming gene 1 protein</fullName>
    </alternativeName>
</protein>
<evidence type="ECO:0000250" key="1"/>
<evidence type="ECO:0000250" key="2">
    <source>
        <dbReference type="UniProtKB" id="O95997"/>
    </source>
</evidence>
<evidence type="ECO:0000256" key="3">
    <source>
        <dbReference type="SAM" id="MobiDB-lite"/>
    </source>
</evidence>
<evidence type="ECO:0000305" key="4"/>
<reference key="1">
    <citation type="submission" date="2006-08" db="EMBL/GenBank/DDBJ databases">
        <title>Positive selection in transcription factor genes on the human lineage.</title>
        <authorList>
            <person name="Nickel G.C."/>
            <person name="Tefft D.L."/>
            <person name="Trevarthen K."/>
            <person name="Funt J."/>
            <person name="Adams M.D."/>
        </authorList>
    </citation>
    <scope>NUCLEOTIDE SEQUENCE [GENOMIC DNA]</scope>
</reference>
<dbReference type="EMBL" id="DQ977383">
    <property type="protein sequence ID" value="ABM92022.1"/>
    <property type="molecule type" value="Genomic_DNA"/>
</dbReference>
<dbReference type="STRING" id="9598.ENSPTRP00000029883"/>
<dbReference type="PaxDb" id="9598-ENSPTRP00000029883"/>
<dbReference type="eggNOG" id="ENOG502S2GG">
    <property type="taxonomic scope" value="Eukaryota"/>
</dbReference>
<dbReference type="InParanoid" id="A2T767"/>
<dbReference type="Proteomes" id="UP000002277">
    <property type="component" value="Unplaced"/>
</dbReference>
<dbReference type="GO" id="GO:0005737">
    <property type="term" value="C:cytoplasm"/>
    <property type="evidence" value="ECO:0007669"/>
    <property type="project" value="UniProtKB-SubCell"/>
</dbReference>
<dbReference type="GO" id="GO:0005634">
    <property type="term" value="C:nucleus"/>
    <property type="evidence" value="ECO:0000318"/>
    <property type="project" value="GO_Central"/>
</dbReference>
<dbReference type="GO" id="GO:0017124">
    <property type="term" value="F:SH3 domain binding"/>
    <property type="evidence" value="ECO:0007669"/>
    <property type="project" value="UniProtKB-KW"/>
</dbReference>
<dbReference type="GO" id="GO:0051301">
    <property type="term" value="P:cell division"/>
    <property type="evidence" value="ECO:0007669"/>
    <property type="project" value="UniProtKB-KW"/>
</dbReference>
<dbReference type="GO" id="GO:0051276">
    <property type="term" value="P:chromosome organization"/>
    <property type="evidence" value="ECO:0007669"/>
    <property type="project" value="InterPro"/>
</dbReference>
<dbReference type="GO" id="GO:0006281">
    <property type="term" value="P:DNA repair"/>
    <property type="evidence" value="ECO:0007669"/>
    <property type="project" value="UniProtKB-KW"/>
</dbReference>
<dbReference type="GO" id="GO:0045143">
    <property type="term" value="P:homologous chromosome segregation"/>
    <property type="evidence" value="ECO:0000318"/>
    <property type="project" value="GO_Central"/>
</dbReference>
<dbReference type="InterPro" id="IPR006940">
    <property type="entry name" value="Securin_separation_inhibitor"/>
</dbReference>
<dbReference type="PANTHER" id="PTHR10418:SF7">
    <property type="entry name" value="SECURIN"/>
    <property type="match status" value="1"/>
</dbReference>
<dbReference type="PANTHER" id="PTHR10418">
    <property type="entry name" value="SECURIN-3"/>
    <property type="match status" value="1"/>
</dbReference>
<dbReference type="Pfam" id="PF04856">
    <property type="entry name" value="Securin"/>
    <property type="match status" value="1"/>
</dbReference>
<keyword id="KW-0007">Acetylation</keyword>
<keyword id="KW-0131">Cell cycle</keyword>
<keyword id="KW-0132">Cell division</keyword>
<keyword id="KW-0159">Chromosome partition</keyword>
<keyword id="KW-0963">Cytoplasm</keyword>
<keyword id="KW-0227">DNA damage</keyword>
<keyword id="KW-0234">DNA repair</keyword>
<keyword id="KW-0498">Mitosis</keyword>
<keyword id="KW-0539">Nucleus</keyword>
<keyword id="KW-0597">Phosphoprotein</keyword>
<keyword id="KW-0656">Proto-oncogene</keyword>
<keyword id="KW-1185">Reference proteome</keyword>
<keyword id="KW-0677">Repeat</keyword>
<keyword id="KW-0729">SH3-binding</keyword>
<keyword id="KW-0832">Ubl conjugation</keyword>
<name>PTTG1_PANTR</name>
<feature type="initiator methionine" description="Removed" evidence="2">
    <location>
        <position position="1"/>
    </location>
</feature>
<feature type="chain" id="PRO_0000285530" description="Securin">
    <location>
        <begin position="2"/>
        <end position="202"/>
    </location>
</feature>
<feature type="region of interest" description="Disordered" evidence="3">
    <location>
        <begin position="1"/>
        <end position="92"/>
    </location>
</feature>
<feature type="short sequence motif" description="D-box">
    <location>
        <begin position="61"/>
        <end position="64"/>
    </location>
</feature>
<feature type="short sequence motif" description="TEK-box 1">
    <location>
        <begin position="71"/>
        <end position="73"/>
    </location>
</feature>
<feature type="short sequence motif" description="TEK-box 2">
    <location>
        <begin position="94"/>
        <end position="96"/>
    </location>
</feature>
<feature type="short sequence motif" description="SH3-binding">
    <location>
        <begin position="163"/>
        <end position="173"/>
    </location>
</feature>
<feature type="modified residue" description="N-acetylalanine" evidence="2">
    <location>
        <position position="2"/>
    </location>
</feature>
<feature type="modified residue" description="Phosphoserine; by CDK1" evidence="2">
    <location>
        <position position="165"/>
    </location>
</feature>
<organism>
    <name type="scientific">Pan troglodytes</name>
    <name type="common">Chimpanzee</name>
    <dbReference type="NCBI Taxonomy" id="9598"/>
    <lineage>
        <taxon>Eukaryota</taxon>
        <taxon>Metazoa</taxon>
        <taxon>Chordata</taxon>
        <taxon>Craniata</taxon>
        <taxon>Vertebrata</taxon>
        <taxon>Euteleostomi</taxon>
        <taxon>Mammalia</taxon>
        <taxon>Eutheria</taxon>
        <taxon>Euarchontoglires</taxon>
        <taxon>Primates</taxon>
        <taxon>Haplorrhini</taxon>
        <taxon>Catarrhini</taxon>
        <taxon>Hominidae</taxon>
        <taxon>Pan</taxon>
    </lineage>
</organism>
<accession>A2T767</accession>
<comment type="function">
    <text evidence="1">Regulatory protein, which plays a central role in chromosome stability, in the p53/TP53 pathway, and DNA repair. Probably acts by blocking the action of key proteins. During the mitosis, it blocks Separase/ESPL1 function, preventing the proteolysis of the cohesin complex and the subsequent segregation of the chromosomes. At the onset of anaphase, it is ubiquitinated, conducting to its destruction and to the liberation of ESPL1. Its function is however not limited to a blocking activity, since it is required to activate ESPL1. Negatively regulates the transcriptional activity and related apoptosis activity of TP53. The negative regulation of TP53 may explain the strong transforming capability of the protein when it is overexpressed. May also play a role in DNA repair via its interaction with Ku, possibly by connecting DNA damage-response pathways with sister chromatid separation (By similarity).</text>
</comment>
<comment type="subunit">
    <text evidence="1">Interacts with RPS10 and DNAJA1 (By similarity). Interacts with the caspase-like ESPL1, and prevents its protease activity probably by covering its active site. Interacts with TP53 and blocks its activity probably by blocking its binding to DNA. Interacts with the Ku 70 kDa subunit of ds-DNA kinase. Interacts with PTTG1IP (By similarity).</text>
</comment>
<comment type="subcellular location">
    <subcellularLocation>
        <location evidence="1">Cytoplasm</location>
    </subcellularLocation>
    <subcellularLocation>
        <location evidence="1">Nucleus</location>
    </subcellularLocation>
</comment>
<comment type="domain">
    <text evidence="1">The N-terminal destruction box (D-box) acts as a recognition signal for degradation via the ubiquitin-proteasome pathway.</text>
</comment>
<comment type="domain">
    <text evidence="1">The TEK-boxes are required for 'Lys-11'-linked ubiquitination and facilitate the transfer of the first ubiquitin and ubiquitin chain nucleation. TEK-boxes may direct a catalytically competent orientation of the UBE2C/UBCH10-ubiquitin thioester with the acceptor lysine residue (By similarity).</text>
</comment>
<comment type="PTM">
    <text evidence="1">Phosphorylated at Ser-165 by CDK1 during mitosis.</text>
</comment>
<comment type="PTM">
    <text evidence="1">Phosphorylated in vitro by ds-DNA kinase.</text>
</comment>
<comment type="PTM">
    <text evidence="1">Ubiquitinated through 'Lys-11' linkage of ubiquitin moieties by the anaphase promoting complex (APC) at the onset of anaphase, conducting to its degradation. 'Lys-11'-linked ubiquitination is mediated by the E2 ligase UBE2C/UBCH10 (By similarity).</text>
</comment>
<comment type="similarity">
    <text evidence="4">Belongs to the securin family.</text>
</comment>
<sequence length="202" mass="22011">MATLIYVDKENGEPGTRVAAKDGLKLGSGPSIKALDGRSQVSTPRFGKTFDAPPALPKATRKALGTVNRATEKSVKTKGPLKQKQPSFSAKKMTEKTVKAKSSVPASDDAYPEIEKFFPFNPLDFESFDLPEEHQIAHLPLSGVPLMILDEERELEKLFQLGXPSPVKMPSPPWESNLLQSPSSILSTLDVELPPVCCDIDI</sequence>
<proteinExistence type="inferred from homology"/>